<accession>P94186</accession>
<feature type="signal peptide" evidence="3">
    <location>
        <begin position="1"/>
        <end position="19"/>
    </location>
</feature>
<feature type="chain" id="PRO_0000021671" description="Mercuric transport protein periplasmic component">
    <location>
        <begin position="20"/>
        <end position="91"/>
    </location>
</feature>
<feature type="domain" description="HMA" evidence="4">
    <location>
        <begin position="22"/>
        <end position="88"/>
    </location>
</feature>
<feature type="binding site" evidence="4">
    <location>
        <position position="33"/>
    </location>
    <ligand>
        <name>Hg(2+)</name>
        <dbReference type="ChEBI" id="CHEBI:16793"/>
    </ligand>
</feature>
<feature type="binding site" evidence="4">
    <location>
        <position position="36"/>
    </location>
    <ligand>
        <name>Hg(2+)</name>
        <dbReference type="ChEBI" id="CHEBI:16793"/>
    </ligand>
</feature>
<keyword id="KW-0475">Mercuric resistance</keyword>
<keyword id="KW-0476">Mercury</keyword>
<keyword id="KW-0479">Metal-binding</keyword>
<keyword id="KW-0574">Periplasm</keyword>
<keyword id="KW-0614">Plasmid</keyword>
<keyword id="KW-0732">Signal</keyword>
<gene>
    <name type="primary">merP</name>
</gene>
<sequence length="91" mass="9505">MKKLFAALALAAVVAPVWAATQTVTLSVPGMTCSTCPITVKKAISKVEGVSKIDVTFETREAVVTFDDAKTSVQKLTKATGDAGYPSSVKQ</sequence>
<name>MERP_ALCSP</name>
<reference key="1">
    <citation type="journal article" date="1997" name="Mol. Microbiol.">
        <title>Intercontinental spread of promiscuous mercury-resistance transposons in environmental bacteria.</title>
        <authorList>
            <person name="Yurieva O."/>
            <person name="Kholodii G."/>
            <person name="Minakhin L."/>
            <person name="Gorlenko Z."/>
            <person name="Kalyaeva E."/>
            <person name="Mindlin S."/>
            <person name="Nikiforov V."/>
        </authorList>
    </citation>
    <scope>NUCLEOTIDE SEQUENCE [GENOMIC DNA]</scope>
</reference>
<dbReference type="EMBL" id="Y08993">
    <property type="protein sequence ID" value="CAA70197.1"/>
    <property type="molecule type" value="Genomic_DNA"/>
</dbReference>
<dbReference type="SMR" id="P94186"/>
<dbReference type="GO" id="GO:0042597">
    <property type="term" value="C:periplasmic space"/>
    <property type="evidence" value="ECO:0007669"/>
    <property type="project" value="UniProtKB-SubCell"/>
</dbReference>
<dbReference type="GO" id="GO:0045340">
    <property type="term" value="F:mercury ion binding"/>
    <property type="evidence" value="ECO:0007669"/>
    <property type="project" value="InterPro"/>
</dbReference>
<dbReference type="GO" id="GO:0015097">
    <property type="term" value="F:mercury ion transmembrane transporter activity"/>
    <property type="evidence" value="ECO:0007669"/>
    <property type="project" value="InterPro"/>
</dbReference>
<dbReference type="CDD" id="cd00371">
    <property type="entry name" value="HMA"/>
    <property type="match status" value="1"/>
</dbReference>
<dbReference type="FunFam" id="3.30.70.100:FF:000005">
    <property type="entry name" value="Copper-exporting P-type ATPase A"/>
    <property type="match status" value="1"/>
</dbReference>
<dbReference type="Gene3D" id="3.30.70.100">
    <property type="match status" value="1"/>
</dbReference>
<dbReference type="InterPro" id="IPR017969">
    <property type="entry name" value="Heavy-metal-associated_CS"/>
</dbReference>
<dbReference type="InterPro" id="IPR006121">
    <property type="entry name" value="HMA_dom"/>
</dbReference>
<dbReference type="InterPro" id="IPR036163">
    <property type="entry name" value="HMA_dom_sf"/>
</dbReference>
<dbReference type="InterPro" id="IPR011795">
    <property type="entry name" value="MerP"/>
</dbReference>
<dbReference type="InterPro" id="IPR001802">
    <property type="entry name" value="MerP/CopZ"/>
</dbReference>
<dbReference type="NCBIfam" id="TIGR02052">
    <property type="entry name" value="MerP"/>
    <property type="match status" value="1"/>
</dbReference>
<dbReference type="PANTHER" id="PTHR46594">
    <property type="entry name" value="P-TYPE CATION-TRANSPORTING ATPASE"/>
    <property type="match status" value="1"/>
</dbReference>
<dbReference type="PANTHER" id="PTHR46594:SF4">
    <property type="entry name" value="P-TYPE CATION-TRANSPORTING ATPASE"/>
    <property type="match status" value="1"/>
</dbReference>
<dbReference type="Pfam" id="PF00403">
    <property type="entry name" value="HMA"/>
    <property type="match status" value="1"/>
</dbReference>
<dbReference type="PRINTS" id="PR00946">
    <property type="entry name" value="HGSCAVENGER"/>
</dbReference>
<dbReference type="SUPFAM" id="SSF55008">
    <property type="entry name" value="HMA, heavy metal-associated domain"/>
    <property type="match status" value="1"/>
</dbReference>
<dbReference type="PROSITE" id="PS01047">
    <property type="entry name" value="HMA_1"/>
    <property type="match status" value="1"/>
</dbReference>
<dbReference type="PROSITE" id="PS50846">
    <property type="entry name" value="HMA_2"/>
    <property type="match status" value="1"/>
</dbReference>
<evidence type="ECO:0000250" key="1">
    <source>
        <dbReference type="UniProtKB" id="P04129"/>
    </source>
</evidence>
<evidence type="ECO:0000250" key="2">
    <source>
        <dbReference type="UniProtKB" id="P13113"/>
    </source>
</evidence>
<evidence type="ECO:0000255" key="3"/>
<evidence type="ECO:0000255" key="4">
    <source>
        <dbReference type="PROSITE-ProRule" id="PRU00280"/>
    </source>
</evidence>
<evidence type="ECO:0000305" key="5"/>
<comment type="function">
    <text evidence="1">Involved in mercury resistance. Acts as a mercury scavenger that specifically binds to a mercuric ion in the periplasm and probably passes it to the cytoplasmic mercuric reductase MerA via the mercuric transport protein MerT.</text>
</comment>
<comment type="subunit">
    <text evidence="2">Monomer.</text>
</comment>
<comment type="subcellular location">
    <subcellularLocation>
        <location evidence="2">Periplasm</location>
    </subcellularLocation>
</comment>
<comment type="similarity">
    <text evidence="5">Belongs to the MerP family.</text>
</comment>
<protein>
    <recommendedName>
        <fullName evidence="1">Mercuric transport protein periplasmic component</fullName>
    </recommendedName>
    <alternativeName>
        <fullName evidence="1">Mercury scavenger protein</fullName>
    </alternativeName>
    <alternativeName>
        <fullName evidence="1">Periplasmic mercury ion-binding protein</fullName>
    </alternativeName>
</protein>
<geneLocation type="plasmid">
    <name>IncHI2 pMER610</name>
</geneLocation>
<proteinExistence type="inferred from homology"/>
<organism>
    <name type="scientific">Alcaligenes sp</name>
    <dbReference type="NCBI Taxonomy" id="512"/>
    <lineage>
        <taxon>Bacteria</taxon>
        <taxon>Pseudomonadati</taxon>
        <taxon>Pseudomonadota</taxon>
        <taxon>Betaproteobacteria</taxon>
        <taxon>Burkholderiales</taxon>
        <taxon>Alcaligenaceae</taxon>
        <taxon>Alcaligenes</taxon>
    </lineage>
</organism>